<organism>
    <name type="scientific">Mycobacterium leprae (strain TN)</name>
    <dbReference type="NCBI Taxonomy" id="272631"/>
    <lineage>
        <taxon>Bacteria</taxon>
        <taxon>Bacillati</taxon>
        <taxon>Actinomycetota</taxon>
        <taxon>Actinomycetes</taxon>
        <taxon>Mycobacteriales</taxon>
        <taxon>Mycobacteriaceae</taxon>
        <taxon>Mycobacterium</taxon>
    </lineage>
</organism>
<gene>
    <name type="primary">murD</name>
    <name type="ordered locus">ML0912</name>
    <name type="ORF">MLCB268.04c</name>
</gene>
<dbReference type="EC" id="6.3.2.9"/>
<dbReference type="EMBL" id="AL583920">
    <property type="protein sequence ID" value="CAC31293.1"/>
    <property type="molecule type" value="Genomic_DNA"/>
</dbReference>
<dbReference type="EMBL" id="AL022602">
    <property type="protein sequence ID" value="CAA18670.1"/>
    <property type="molecule type" value="Genomic_DNA"/>
</dbReference>
<dbReference type="PIR" id="B87023">
    <property type="entry name" value="B87023"/>
</dbReference>
<dbReference type="RefSeq" id="NP_301695.1">
    <property type="nucleotide sequence ID" value="NC_002677.1"/>
</dbReference>
<dbReference type="RefSeq" id="WP_010908019.1">
    <property type="nucleotide sequence ID" value="NC_002677.1"/>
</dbReference>
<dbReference type="SMR" id="P57995"/>
<dbReference type="STRING" id="272631.gene:17574738"/>
<dbReference type="KEGG" id="mle:ML0912"/>
<dbReference type="PATRIC" id="fig|272631.5.peg.1655"/>
<dbReference type="Leproma" id="ML0912"/>
<dbReference type="eggNOG" id="COG0771">
    <property type="taxonomic scope" value="Bacteria"/>
</dbReference>
<dbReference type="HOGENOM" id="CLU_032540_0_0_11"/>
<dbReference type="OrthoDB" id="9809796at2"/>
<dbReference type="UniPathway" id="UPA00219"/>
<dbReference type="Proteomes" id="UP000000806">
    <property type="component" value="Chromosome"/>
</dbReference>
<dbReference type="GO" id="GO:0005737">
    <property type="term" value="C:cytoplasm"/>
    <property type="evidence" value="ECO:0007669"/>
    <property type="project" value="UniProtKB-SubCell"/>
</dbReference>
<dbReference type="GO" id="GO:0005524">
    <property type="term" value="F:ATP binding"/>
    <property type="evidence" value="ECO:0007669"/>
    <property type="project" value="UniProtKB-UniRule"/>
</dbReference>
<dbReference type="GO" id="GO:0008764">
    <property type="term" value="F:UDP-N-acetylmuramoylalanine-D-glutamate ligase activity"/>
    <property type="evidence" value="ECO:0007669"/>
    <property type="project" value="UniProtKB-UniRule"/>
</dbReference>
<dbReference type="GO" id="GO:0051301">
    <property type="term" value="P:cell division"/>
    <property type="evidence" value="ECO:0007669"/>
    <property type="project" value="UniProtKB-KW"/>
</dbReference>
<dbReference type="GO" id="GO:0071555">
    <property type="term" value="P:cell wall organization"/>
    <property type="evidence" value="ECO:0007669"/>
    <property type="project" value="UniProtKB-KW"/>
</dbReference>
<dbReference type="GO" id="GO:0009252">
    <property type="term" value="P:peptidoglycan biosynthetic process"/>
    <property type="evidence" value="ECO:0007669"/>
    <property type="project" value="UniProtKB-UniRule"/>
</dbReference>
<dbReference type="GO" id="GO:0008360">
    <property type="term" value="P:regulation of cell shape"/>
    <property type="evidence" value="ECO:0007669"/>
    <property type="project" value="UniProtKB-KW"/>
</dbReference>
<dbReference type="Gene3D" id="3.90.190.20">
    <property type="entry name" value="Mur ligase, C-terminal domain"/>
    <property type="match status" value="1"/>
</dbReference>
<dbReference type="Gene3D" id="3.40.1190.10">
    <property type="entry name" value="Mur-like, catalytic domain"/>
    <property type="match status" value="1"/>
</dbReference>
<dbReference type="Gene3D" id="3.40.50.720">
    <property type="entry name" value="NAD(P)-binding Rossmann-like Domain"/>
    <property type="match status" value="1"/>
</dbReference>
<dbReference type="HAMAP" id="MF_00639">
    <property type="entry name" value="MurD"/>
    <property type="match status" value="1"/>
</dbReference>
<dbReference type="InterPro" id="IPR036565">
    <property type="entry name" value="Mur-like_cat_sf"/>
</dbReference>
<dbReference type="InterPro" id="IPR036615">
    <property type="entry name" value="Mur_ligase_C_dom_sf"/>
</dbReference>
<dbReference type="InterPro" id="IPR013221">
    <property type="entry name" value="Mur_ligase_cen"/>
</dbReference>
<dbReference type="InterPro" id="IPR005762">
    <property type="entry name" value="MurD"/>
</dbReference>
<dbReference type="NCBIfam" id="TIGR01087">
    <property type="entry name" value="murD"/>
    <property type="match status" value="1"/>
</dbReference>
<dbReference type="PANTHER" id="PTHR43692">
    <property type="entry name" value="UDP-N-ACETYLMURAMOYLALANINE--D-GLUTAMATE LIGASE"/>
    <property type="match status" value="1"/>
</dbReference>
<dbReference type="PANTHER" id="PTHR43692:SF1">
    <property type="entry name" value="UDP-N-ACETYLMURAMOYLALANINE--D-GLUTAMATE LIGASE"/>
    <property type="match status" value="1"/>
</dbReference>
<dbReference type="Pfam" id="PF08245">
    <property type="entry name" value="Mur_ligase_M"/>
    <property type="match status" value="1"/>
</dbReference>
<dbReference type="SUPFAM" id="SSF51984">
    <property type="entry name" value="MurCD N-terminal domain"/>
    <property type="match status" value="1"/>
</dbReference>
<dbReference type="SUPFAM" id="SSF53623">
    <property type="entry name" value="MurD-like peptide ligases, catalytic domain"/>
    <property type="match status" value="1"/>
</dbReference>
<dbReference type="SUPFAM" id="SSF53244">
    <property type="entry name" value="MurD-like peptide ligases, peptide-binding domain"/>
    <property type="match status" value="2"/>
</dbReference>
<evidence type="ECO:0000250" key="1"/>
<evidence type="ECO:0000255" key="2"/>
<evidence type="ECO:0000305" key="3"/>
<sequence length="490" mass="50583">MLDTLVPGAPVLVAGGGVTGRAVLAALTRFGMAATLCDDDPAALQQYADNGVATVSAATATQQMFERGRKYVLVVTSPGFAPTTPVLVAASAARVPIWGDVELAWRLDAAGYYGPPRRWLVVTGTNGKTTTTSMLHAMLAADNRRSLLCGNIGRPVLDVLTEFAEPSDFLAVELSSFQLHWAPSLRPEAGVVLNIAEDHLDWHSTMADYTMAKARVLTGRVAVVGLDDSRAAALLSTTVAPVRVGFRFGEPAVGELGVRDGYLVDRAFAEDLALMPVTSIPVSGPVGVLDALAAAALARSVGVGATAIADAVALFRLGRHRAEVVAVADGIRYVDDSKATNPHAALVSVLAYPRVVWVAGGLLKGASVDAEVARMAPQLVGAVLIGRDRAMVAEALSRHAPNVPVVQVVAGEDAGMHAVAVVSGTDVISISDVGGTIGTRVMVAAVAAARDLAQPGDTVLLAPAGASFDQFSGYADRGDTFATAVRAAIR</sequence>
<accession>P57995</accession>
<accession>O69554</accession>
<protein>
    <recommendedName>
        <fullName>UDP-N-acetylmuramoylalanine--D-glutamate ligase</fullName>
        <ecNumber>6.3.2.9</ecNumber>
    </recommendedName>
    <alternativeName>
        <fullName>D-glutamic acid-adding enzyme</fullName>
    </alternativeName>
    <alternativeName>
        <fullName>UDP-N-acetylmuramoyl-L-alanyl-D-glutamate synthetase</fullName>
    </alternativeName>
</protein>
<keyword id="KW-0067">ATP-binding</keyword>
<keyword id="KW-0131">Cell cycle</keyword>
<keyword id="KW-0132">Cell division</keyword>
<keyword id="KW-0133">Cell shape</keyword>
<keyword id="KW-0961">Cell wall biogenesis/degradation</keyword>
<keyword id="KW-0963">Cytoplasm</keyword>
<keyword id="KW-0436">Ligase</keyword>
<keyword id="KW-0547">Nucleotide-binding</keyword>
<keyword id="KW-0573">Peptidoglycan synthesis</keyword>
<keyword id="KW-1185">Reference proteome</keyword>
<proteinExistence type="inferred from homology"/>
<reference key="1">
    <citation type="journal article" date="2001" name="Nature">
        <title>Massive gene decay in the leprosy bacillus.</title>
        <authorList>
            <person name="Cole S.T."/>
            <person name="Eiglmeier K."/>
            <person name="Parkhill J."/>
            <person name="James K.D."/>
            <person name="Thomson N.R."/>
            <person name="Wheeler P.R."/>
            <person name="Honore N."/>
            <person name="Garnier T."/>
            <person name="Churcher C.M."/>
            <person name="Harris D.E."/>
            <person name="Mungall K.L."/>
            <person name="Basham D."/>
            <person name="Brown D."/>
            <person name="Chillingworth T."/>
            <person name="Connor R."/>
            <person name="Davies R.M."/>
            <person name="Devlin K."/>
            <person name="Duthoy S."/>
            <person name="Feltwell T."/>
            <person name="Fraser A."/>
            <person name="Hamlin N."/>
            <person name="Holroyd S."/>
            <person name="Hornsby T."/>
            <person name="Jagels K."/>
            <person name="Lacroix C."/>
            <person name="Maclean J."/>
            <person name="Moule S."/>
            <person name="Murphy L.D."/>
            <person name="Oliver K."/>
            <person name="Quail M.A."/>
            <person name="Rajandream M.A."/>
            <person name="Rutherford K.M."/>
            <person name="Rutter S."/>
            <person name="Seeger K."/>
            <person name="Simon S."/>
            <person name="Simmonds M."/>
            <person name="Skelton J."/>
            <person name="Squares R."/>
            <person name="Squares S."/>
            <person name="Stevens K."/>
            <person name="Taylor K."/>
            <person name="Whitehead S."/>
            <person name="Woodward J.R."/>
            <person name="Barrell B.G."/>
        </authorList>
    </citation>
    <scope>NUCLEOTIDE SEQUENCE [LARGE SCALE GENOMIC DNA]</scope>
    <source>
        <strain>TN</strain>
    </source>
</reference>
<comment type="function">
    <text evidence="1">Cell wall formation. Catalyzes the addition of glutamate to the nucleotide precursor UDP-N-acetylmuramoyl-L-alanine (UMA).</text>
</comment>
<comment type="catalytic activity">
    <reaction>
        <text>UDP-N-acetyl-alpha-D-muramoyl-L-alanine + D-glutamate + ATP = UDP-N-acetyl-alpha-D-muramoyl-L-alanyl-D-glutamate + ADP + phosphate + H(+)</text>
        <dbReference type="Rhea" id="RHEA:16429"/>
        <dbReference type="ChEBI" id="CHEBI:15378"/>
        <dbReference type="ChEBI" id="CHEBI:29986"/>
        <dbReference type="ChEBI" id="CHEBI:30616"/>
        <dbReference type="ChEBI" id="CHEBI:43474"/>
        <dbReference type="ChEBI" id="CHEBI:83898"/>
        <dbReference type="ChEBI" id="CHEBI:83900"/>
        <dbReference type="ChEBI" id="CHEBI:456216"/>
        <dbReference type="EC" id="6.3.2.9"/>
    </reaction>
</comment>
<comment type="pathway">
    <text>Cell wall biogenesis; peptidoglycan biosynthesis.</text>
</comment>
<comment type="subcellular location">
    <subcellularLocation>
        <location evidence="1">Cytoplasm</location>
    </subcellularLocation>
</comment>
<comment type="similarity">
    <text evidence="3">Belongs to the MurCDEF family.</text>
</comment>
<feature type="chain" id="PRO_0000109044" description="UDP-N-acetylmuramoylalanine--D-glutamate ligase">
    <location>
        <begin position="1"/>
        <end position="490"/>
    </location>
</feature>
<feature type="binding site" evidence="2">
    <location>
        <begin position="124"/>
        <end position="130"/>
    </location>
    <ligand>
        <name>ATP</name>
        <dbReference type="ChEBI" id="CHEBI:30616"/>
    </ligand>
</feature>
<name>MURD_MYCLE</name>